<accession>P16882</accession>
<accession>P16590</accession>
<accession>Q61653</accession>
<accession>Q6DI66</accession>
<accession>Q80W86</accession>
<accession>Q8R1M5</accession>
<accession>Q920Z3</accession>
<accession>Q9R264</accession>
<comment type="function">
    <text evidence="1">Receptor for pituitary gland growth hormone (GH1) involved in regulating postnatal body growth. On ligand binding, couples to the JAK2/STAT5 pathway.</text>
</comment>
<comment type="function">
    <molecule>Growth hormone-binding protein</molecule>
    <text evidence="1">The soluble form (GHBP) acts as a reservoir of growth hormone in plasma and may be a modulator/inhibitor of GH signaling.</text>
</comment>
<comment type="subunit">
    <text evidence="1">On growth hormone (GH) binding, forms homodimers and binds JAK2 via a box 1-containing domain.</text>
</comment>
<comment type="subcellular location">
    <subcellularLocation>
        <location evidence="1">Cell membrane</location>
        <topology evidence="4">Single-pass type I membrane protein</topology>
    </subcellularLocation>
    <text evidence="3">On growth hormone binding, GHR is ubiquitinated, internalized, down-regulated and transported into a degradative or non-degradative pathway.</text>
</comment>
<comment type="subcellular location">
    <molecule>Growth hormone-binding protein</molecule>
    <subcellularLocation>
        <location evidence="1">Secreted</location>
    </subcellularLocation>
    <text evidence="1">Complexed to a substantial fraction of circulating GH.</text>
</comment>
<comment type="alternative products">
    <event type="alternative splicing"/>
    <isoform>
        <id>P16882-1</id>
        <name>1</name>
        <name>HMW GHR</name>
        <sequence type="displayed"/>
    </isoform>
    <isoform>
        <id>P16882-2</id>
        <name>2</name>
        <name>LMW GHR</name>
        <name>GHBP</name>
        <sequence type="described" ref="VSP_001716 VSP_001717"/>
    </isoform>
</comment>
<comment type="tissue specificity">
    <text evidence="7">Expressed in all tissues tested including, liver, heart, adipose tissue, mammary gland, testes, ovary, brain, kidney and muscle. Highest levels in liver.</text>
</comment>
<comment type="developmental stage">
    <text evidence="8">During gestation, both hepatic and serum expression begins at day 9 (PubMed:12379490). Levels increased 8-fold in liver and 30-fold in serum by late gestation (PubMed:12379490). Levels of isoform 1 and isoform 2 similarly begin at day 9 with isoform 1 expression reaching maximum levels by day 13, isoform 2 levels continue to increase until the end of pregnancy (PubMed:12379490).</text>
</comment>
<comment type="domain">
    <text evidence="1">The WSXWS motif appears to be necessary for proper protein folding and thereby efficient intracellular transport and cell-surface receptor binding.</text>
</comment>
<comment type="domain">
    <text evidence="2">The box 1 motif is required for JAK interaction and/or activation.</text>
</comment>
<comment type="domain">
    <text evidence="1">The extracellular domain is the ligand-binding domain representing the growth hormone-binding protein (GHBP).</text>
</comment>
<comment type="domain">
    <text evidence="3">The ubiquitination-dependent endocytosis motif (UbE) is required for recruitment of the ubiquitin conjugation system on to the receptor and for its internalization.</text>
</comment>
<comment type="PTM">
    <text evidence="1 3">The soluble form (GHBP) is produced by phorbol ester-promoted proteolytic cleavage at the cell surface (shedding) by ADAM17/TACE (By similarity). Shedding is inhibited by growth hormone (GH) binding to the receptor probably due to a conformational change in GHR rendering the receptor inaccessible to ADAM17 (By similarity).</text>
</comment>
<comment type="PTM">
    <text evidence="9">On GH binding, phosphorylated on tyrosine residues in the cytoplasmic domain by JAK2.</text>
</comment>
<comment type="PTM">
    <text evidence="3 9">Ubiquitinated by the ECS(SOCS2) complex following ligand-binding and phosphorylation by JAK2, leading to its degradation by the proteasome (PubMed:21980433). Regulation by the ECS(SOCS2) complex acts as a negative feedback loop of growth hormone receptor signaling (PubMed:21980433). Ubiquitination is not sufficient for GHR internalization (By similarity).</text>
</comment>
<comment type="similarity">
    <text evidence="13">Belongs to the type I cytokine receptor family. Type 1 subfamily.</text>
</comment>
<evidence type="ECO:0000250" key="1">
    <source>
        <dbReference type="UniProtKB" id="P10912"/>
    </source>
</evidence>
<evidence type="ECO:0000250" key="2">
    <source>
        <dbReference type="UniProtKB" id="P16310"/>
    </source>
</evidence>
<evidence type="ECO:0000250" key="3">
    <source>
        <dbReference type="UniProtKB" id="P19941"/>
    </source>
</evidence>
<evidence type="ECO:0000255" key="4"/>
<evidence type="ECO:0000255" key="5">
    <source>
        <dbReference type="PROSITE-ProRule" id="PRU00316"/>
    </source>
</evidence>
<evidence type="ECO:0000256" key="6">
    <source>
        <dbReference type="SAM" id="MobiDB-lite"/>
    </source>
</evidence>
<evidence type="ECO:0000269" key="7">
    <source>
    </source>
</evidence>
<evidence type="ECO:0000269" key="8">
    <source>
    </source>
</evidence>
<evidence type="ECO:0000269" key="9">
    <source>
    </source>
</evidence>
<evidence type="ECO:0000269" key="10">
    <source>
    </source>
</evidence>
<evidence type="ECO:0000303" key="11">
    <source>
    </source>
</evidence>
<evidence type="ECO:0000303" key="12">
    <source>
    </source>
</evidence>
<evidence type="ECO:0000305" key="13"/>
<reference key="1">
    <citation type="journal article" date="1989" name="Mol. Endocrinol.">
        <title>Mouse serum growth hormone (GH) binding protein has GH receptor extracellular and substituted transmembrane domains.</title>
        <authorList>
            <person name="Smith W.C."/>
            <person name="Kuniyoshi J."/>
            <person name="Talamantes F."/>
        </authorList>
    </citation>
    <scope>NUCLEOTIDE SEQUENCE [MRNA] (ISOFORMS 1 AND 2)</scope>
</reference>
<reference key="2">
    <citation type="journal article" date="1994" name="Endocrinology">
        <title>Mouse growth hormone receptor/binding protein and growth hormone receptor transcripts are produced from a single gene by alternative splicing.</title>
        <authorList>
            <person name="Edens A."/>
            <person name="Southard J.N."/>
            <person name="Talamantes F."/>
        </authorList>
    </citation>
    <scope>NUCLEOTIDE SEQUENCE [GENOMIC DNA] (ISOFORM 2)</scope>
    <scope>NUCLEOTIDE SEQUENCE OF 156-300 (ISOFORM 1)</scope>
    <source>
        <strain>DBA/2J</strain>
        <strain>Swiss Webster</strain>
    </source>
</reference>
<reference key="3">
    <citation type="journal article" date="1999" name="J. Mol. Endocrinol.">
        <title>Structure and expression of the mouse growth hormone receptor/growth hormone binding protein gene.</title>
        <authorList>
            <person name="Moffat J.G."/>
            <person name="Edens A."/>
            <person name="Talamantes F."/>
        </authorList>
    </citation>
    <scope>NUCLEOTIDE SEQUENCE [GENOMIC DNA] (ISOFORMS 1 AND 2)</scope>
    <scope>TISSUE SPECIFICITY</scope>
    <source>
        <strain>DBA/2J</strain>
        <strain>Swiss Webster</strain>
    </source>
</reference>
<reference key="4">
    <citation type="journal article" date="2004" name="Genome Res.">
        <title>The status, quality, and expansion of the NIH full-length cDNA project: the Mammalian Gene Collection (MGC).</title>
        <authorList>
            <consortium name="The MGC Project Team"/>
        </authorList>
    </citation>
    <scope>NUCLEOTIDE SEQUENCE [LARGE SCALE MRNA] (ISOFORMS 1 AND 2)</scope>
    <source>
        <tissue>Kidney</tissue>
    </source>
</reference>
<reference key="5">
    <citation type="journal article" date="1994" name="Receptor">
        <title>An exon encoding the mouse growth hormone binding protein (mGHBP) carboxy terminus is located between exon 7 and 8 of the mouse growth hormone receptor gene.</title>
        <authorList>
            <person name="Zhou Y."/>
            <person name="He L."/>
            <person name="Kopchick J.J."/>
        </authorList>
    </citation>
    <scope>NUCLEOTIDE SEQUENCE [GENOMIC DNA] OF 47-88 AND 156-650 (ISOFORM 1)</scope>
    <source>
        <strain>C57BL/6J</strain>
    </source>
</reference>
<reference key="6">
    <citation type="submission" date="1996-02" db="EMBL/GenBank/DDBJ databases">
        <authorList>
            <person name="Zhou Y."/>
            <person name="He L."/>
            <person name="Kopchick J.J."/>
        </authorList>
    </citation>
    <scope>SEQUENCE REVISION</scope>
</reference>
<reference key="7">
    <citation type="submission" date="2003-04" db="EMBL/GenBank/DDBJ databases">
        <title>Mouse growth hormone receptor cytoplasmic exons 9 and 10 genomic clone with flanking intronic sequence.</title>
        <authorList>
            <person name="Rowland J.E."/>
            <person name="Waters M.J."/>
        </authorList>
    </citation>
    <scope>NUCLEOTIDE SEQUENCE [GENOMIC DNA] OF 302-650 (ISOFORM 1)</scope>
    <source>
        <strain>129/SvJ</strain>
    </source>
</reference>
<reference key="8">
    <citation type="journal article" date="1988" name="Mol. Endocrinol.">
        <title>Isolation of two molecular weight variants of the mouse growth hormone receptor.</title>
        <authorList>
            <person name="Smith W.C."/>
            <person name="Colosi P."/>
            <person name="Talamantes F."/>
        </authorList>
    </citation>
    <scope>PROTEIN SEQUENCE OF 25-41</scope>
</reference>
<reference key="9">
    <citation type="journal article" date="2002" name="J. Endocrinol.">
        <title>Structure and regulation of expression of the mouse GH receptor.</title>
        <authorList>
            <person name="Talamantes F."/>
            <person name="Ortiz R."/>
        </authorList>
    </citation>
    <scope>DEVELOPMENTAL STAGE</scope>
</reference>
<reference key="10">
    <citation type="journal article" date="2011" name="PLoS ONE">
        <title>The SOCS2 ubiquitin ligase complex regulates growth hormone receptor levels.</title>
        <authorList>
            <person name="Vesterlund M."/>
            <person name="Zadjali F."/>
            <person name="Persson T."/>
            <person name="Nielsen M.L."/>
            <person name="Kessler B.M."/>
            <person name="Norstedt G."/>
            <person name="Flores-Morales A."/>
        </authorList>
    </citation>
    <scope>PHOSPHORYLATION</scope>
    <scope>UBIQUITINATION</scope>
</reference>
<keyword id="KW-0025">Alternative splicing</keyword>
<keyword id="KW-1003">Cell membrane</keyword>
<keyword id="KW-0903">Direct protein sequencing</keyword>
<keyword id="KW-1015">Disulfide bond</keyword>
<keyword id="KW-0254">Endocytosis</keyword>
<keyword id="KW-0325">Glycoprotein</keyword>
<keyword id="KW-0472">Membrane</keyword>
<keyword id="KW-0597">Phosphoprotein</keyword>
<keyword id="KW-0675">Receptor</keyword>
<keyword id="KW-1185">Reference proteome</keyword>
<keyword id="KW-0964">Secreted</keyword>
<keyword id="KW-0732">Signal</keyword>
<keyword id="KW-0812">Transmembrane</keyword>
<keyword id="KW-1133">Transmembrane helix</keyword>
<keyword id="KW-0832">Ubl conjugation</keyword>
<name>GHR_MOUSE</name>
<gene>
    <name type="primary">Ghr</name>
</gene>
<protein>
    <recommendedName>
        <fullName evidence="12">Growth hormone receptor</fullName>
        <shortName>GH receptor</shortName>
    </recommendedName>
    <alternativeName>
        <fullName>Somatotropin receptor</fullName>
    </alternativeName>
    <component>
        <recommendedName>
            <fullName>Growth hormone-binding protein</fullName>
            <shortName>GH-binding protein</shortName>
            <shortName>GHBP</shortName>
        </recommendedName>
        <alternativeName>
            <fullName>Serum-binding protein</fullName>
        </alternativeName>
    </component>
</protein>
<organism>
    <name type="scientific">Mus musculus</name>
    <name type="common">Mouse</name>
    <dbReference type="NCBI Taxonomy" id="10090"/>
    <lineage>
        <taxon>Eukaryota</taxon>
        <taxon>Metazoa</taxon>
        <taxon>Chordata</taxon>
        <taxon>Craniata</taxon>
        <taxon>Vertebrata</taxon>
        <taxon>Euteleostomi</taxon>
        <taxon>Mammalia</taxon>
        <taxon>Eutheria</taxon>
        <taxon>Euarchontoglires</taxon>
        <taxon>Glires</taxon>
        <taxon>Rodentia</taxon>
        <taxon>Myomorpha</taxon>
        <taxon>Muroidea</taxon>
        <taxon>Muridae</taxon>
        <taxon>Murinae</taxon>
        <taxon>Mus</taxon>
        <taxon>Mus</taxon>
    </lineage>
</organism>
<sequence length="650" mass="72783">MDLCQVFLTLALAVTSSTFSGSEATPATLGKASPVLQRINPSLGTSSSGKPRFTKCRSPELETFSCYWTEGDNPDLKTPGSIQLYYAKRESQRQAARIAHEWTQEWKECPDYVSAGKNSCYFNSSYTSIWIPYCIKLTTNGDLLDQKCFTVDEIVQPDPPIGLNWTLLNISLTGIRGDIQVSWQPPPNADVLKGWIILEYEIQYKEVNESKWKVMGPIWLTYCPVYSLRMDKEHEVRVRSRQRSFEKYSEFSEVLRVIFPQTNILEACEEDIQFPWFLIIIFGIFGVAVMLFVVIFSKQQRIKMLILPPVPVPKIKGIDPDLLKEGKLEEVNTILGIHDNYKPDFYNDDSWVEFIELDIDEADVDEKTEGSDTDRLLSNDHEKSAGILGAKDDDSGRTSCYDPDILDTDFHTSDMCDGTLKFRQSQKLNMEADLLCLDQKNLKNLPYDASLGSLHPSITQTVEENKPQPLLSSETEATHQLASTPMSNPTSLANIDFYAQVSDITPAGGDVLSPGQKIKAGIAQGNTQREVATPCQENYSMNSAYFCESDAKKCIAVARRMEATSCIKPSFNQEDIYITTESLTTTAQMSETADIAPDAEMSVPDYTTVHTVQSPRGLILNATALPLPDKKNFPSSCGYVSTDQLNKIMQ</sequence>
<dbReference type="EMBL" id="M33324">
    <property type="protein sequence ID" value="AAA37690.1"/>
    <property type="status" value="ALT_SEQ"/>
    <property type="molecule type" value="mRNA"/>
</dbReference>
<dbReference type="EMBL" id="M31680">
    <property type="protein sequence ID" value="AAA37689.1"/>
    <property type="status" value="ALT_SEQ"/>
    <property type="molecule type" value="mRNA"/>
</dbReference>
<dbReference type="EMBL" id="U15012">
    <property type="protein sequence ID" value="AAA69000.1"/>
    <property type="molecule type" value="Genomic_DNA"/>
</dbReference>
<dbReference type="EMBL" id="U15011">
    <property type="protein sequence ID" value="AAA69000.1"/>
    <property type="status" value="JOINED"/>
    <property type="molecule type" value="Genomic_DNA"/>
</dbReference>
<dbReference type="EMBL" id="U15013">
    <property type="protein sequence ID" value="AAA69000.1"/>
    <property type="status" value="JOINED"/>
    <property type="molecule type" value="Genomic_DNA"/>
</dbReference>
<dbReference type="EMBL" id="AF120489">
    <property type="protein sequence ID" value="AAD32556.1"/>
    <property type="molecule type" value="Genomic_DNA"/>
</dbReference>
<dbReference type="EMBL" id="AF120481">
    <property type="protein sequence ID" value="AAD32556.1"/>
    <property type="status" value="JOINED"/>
    <property type="molecule type" value="Genomic_DNA"/>
</dbReference>
<dbReference type="EMBL" id="AF120482">
    <property type="protein sequence ID" value="AAD32556.1"/>
    <property type="status" value="JOINED"/>
    <property type="molecule type" value="Genomic_DNA"/>
</dbReference>
<dbReference type="EMBL" id="AF120483">
    <property type="protein sequence ID" value="AAD32556.1"/>
    <property type="status" value="JOINED"/>
    <property type="molecule type" value="Genomic_DNA"/>
</dbReference>
<dbReference type="EMBL" id="AF120484">
    <property type="protein sequence ID" value="AAD32556.1"/>
    <property type="status" value="JOINED"/>
    <property type="molecule type" value="Genomic_DNA"/>
</dbReference>
<dbReference type="EMBL" id="AF120485">
    <property type="protein sequence ID" value="AAD32556.1"/>
    <property type="status" value="JOINED"/>
    <property type="molecule type" value="Genomic_DNA"/>
</dbReference>
<dbReference type="EMBL" id="AF120486">
    <property type="protein sequence ID" value="AAD32556.1"/>
    <property type="status" value="JOINED"/>
    <property type="molecule type" value="Genomic_DNA"/>
</dbReference>
<dbReference type="EMBL" id="AF120487">
    <property type="protein sequence ID" value="AAD32556.1"/>
    <property type="status" value="JOINED"/>
    <property type="molecule type" value="Genomic_DNA"/>
</dbReference>
<dbReference type="EMBL" id="AF120488">
    <property type="protein sequence ID" value="AAD32556.1"/>
    <property type="status" value="JOINED"/>
    <property type="molecule type" value="Genomic_DNA"/>
</dbReference>
<dbReference type="EMBL" id="AF120487">
    <property type="protein sequence ID" value="AAD32555.1"/>
    <property type="molecule type" value="Genomic_DNA"/>
</dbReference>
<dbReference type="EMBL" id="AF120481">
    <property type="protein sequence ID" value="AAD32555.1"/>
    <property type="status" value="JOINED"/>
    <property type="molecule type" value="Genomic_DNA"/>
</dbReference>
<dbReference type="EMBL" id="AF120482">
    <property type="protein sequence ID" value="AAD32555.1"/>
    <property type="status" value="JOINED"/>
    <property type="molecule type" value="Genomic_DNA"/>
</dbReference>
<dbReference type="EMBL" id="AF120483">
    <property type="protein sequence ID" value="AAD32555.1"/>
    <property type="status" value="JOINED"/>
    <property type="molecule type" value="Genomic_DNA"/>
</dbReference>
<dbReference type="EMBL" id="AF120484">
    <property type="protein sequence ID" value="AAD32555.1"/>
    <property type="status" value="JOINED"/>
    <property type="molecule type" value="Genomic_DNA"/>
</dbReference>
<dbReference type="EMBL" id="AF120485">
    <property type="protein sequence ID" value="AAD32555.1"/>
    <property type="status" value="JOINED"/>
    <property type="molecule type" value="Genomic_DNA"/>
</dbReference>
<dbReference type="EMBL" id="AF120486">
    <property type="protein sequence ID" value="AAD32555.1"/>
    <property type="status" value="JOINED"/>
    <property type="molecule type" value="Genomic_DNA"/>
</dbReference>
<dbReference type="EMBL" id="BC024375">
    <property type="protein sequence ID" value="AAH24375.1"/>
    <property type="molecule type" value="mRNA"/>
</dbReference>
<dbReference type="EMBL" id="BC075720">
    <property type="protein sequence ID" value="AAH75720.1"/>
    <property type="molecule type" value="mRNA"/>
</dbReference>
<dbReference type="EMBL" id="U49266">
    <property type="protein sequence ID" value="AAK62802.1"/>
    <property type="molecule type" value="Genomic_DNA"/>
</dbReference>
<dbReference type="EMBL" id="U49268">
    <property type="protein sequence ID" value="AAK62802.1"/>
    <property type="status" value="JOINED"/>
    <property type="molecule type" value="Genomic_DNA"/>
</dbReference>
<dbReference type="EMBL" id="U43933">
    <property type="protein sequence ID" value="AAK62802.1"/>
    <property type="status" value="JOINED"/>
    <property type="molecule type" value="Genomic_DNA"/>
</dbReference>
<dbReference type="EMBL" id="U49267">
    <property type="protein sequence ID" value="AAK62803.1"/>
    <property type="molecule type" value="Genomic_DNA"/>
</dbReference>
<dbReference type="EMBL" id="AY271378">
    <property type="protein sequence ID" value="AAP33018.1"/>
    <property type="molecule type" value="Genomic_DNA"/>
</dbReference>
<dbReference type="CCDS" id="CCDS27358.1">
    <molecule id="P16882-1"/>
</dbReference>
<dbReference type="CCDS" id="CCDS37024.1">
    <molecule id="P16882-2"/>
</dbReference>
<dbReference type="PIR" id="I48363">
    <property type="entry name" value="I48363"/>
</dbReference>
<dbReference type="PIR" id="S33608">
    <property type="entry name" value="S33608"/>
</dbReference>
<dbReference type="RefSeq" id="NP_001041643.1">
    <molecule id="P16882-2"/>
    <property type="nucleotide sequence ID" value="NM_001048178.2"/>
</dbReference>
<dbReference type="RefSeq" id="NP_001273299.1">
    <property type="nucleotide sequence ID" value="NM_001286370.1"/>
</dbReference>
<dbReference type="RefSeq" id="NP_034414.2">
    <property type="nucleotide sequence ID" value="NM_010284.3"/>
</dbReference>
<dbReference type="SMR" id="P16882"/>
<dbReference type="BioGRID" id="199915">
    <property type="interactions" value="2"/>
</dbReference>
<dbReference type="DIP" id="DIP-441N"/>
<dbReference type="FunCoup" id="P16882">
    <property type="interactions" value="1185"/>
</dbReference>
<dbReference type="IntAct" id="P16882">
    <property type="interactions" value="1"/>
</dbReference>
<dbReference type="MINT" id="P16882"/>
<dbReference type="STRING" id="10090.ENSMUSP00000069457"/>
<dbReference type="GlyCosmos" id="P16882">
    <property type="glycosylation" value="4 sites, No reported glycans"/>
</dbReference>
<dbReference type="GlyGen" id="P16882">
    <property type="glycosylation" value="5 sites"/>
</dbReference>
<dbReference type="iPTMnet" id="P16882"/>
<dbReference type="PhosphoSitePlus" id="P16882"/>
<dbReference type="PaxDb" id="10090-ENSMUSP00000069457"/>
<dbReference type="PeptideAtlas" id="P16882"/>
<dbReference type="ProteomicsDB" id="265743">
    <molecule id="P16882-1"/>
</dbReference>
<dbReference type="ProteomicsDB" id="265744">
    <molecule id="P16882-2"/>
</dbReference>
<dbReference type="Pumba" id="P16882"/>
<dbReference type="Antibodypedia" id="23220">
    <property type="antibodies" value="401 antibodies from 36 providers"/>
</dbReference>
<dbReference type="DNASU" id="14600"/>
<dbReference type="Ensembl" id="ENSMUST00000110697.9">
    <molecule id="P16882-2"/>
    <property type="protein sequence ID" value="ENSMUSP00000106325.3"/>
    <property type="gene ID" value="ENSMUSG00000055737.13"/>
</dbReference>
<dbReference type="Ensembl" id="ENSMUST00000110698.9">
    <molecule id="P16882-2"/>
    <property type="protein sequence ID" value="ENSMUSP00000106326.3"/>
    <property type="gene ID" value="ENSMUSG00000055737.13"/>
</dbReference>
<dbReference type="GeneID" id="14600"/>
<dbReference type="KEGG" id="mmu:14600"/>
<dbReference type="UCSC" id="uc007vce.2">
    <molecule id="P16882-2"/>
    <property type="organism name" value="mouse"/>
</dbReference>
<dbReference type="AGR" id="MGI:95708"/>
<dbReference type="CTD" id="2690"/>
<dbReference type="MGI" id="MGI:95708">
    <property type="gene designation" value="Ghr"/>
</dbReference>
<dbReference type="VEuPathDB" id="HostDB:ENSMUSG00000055737"/>
<dbReference type="eggNOG" id="KOG3555">
    <property type="taxonomic scope" value="Eukaryota"/>
</dbReference>
<dbReference type="GeneTree" id="ENSGT00940000159987"/>
<dbReference type="HOGENOM" id="CLU_017892_1_1_1"/>
<dbReference type="InParanoid" id="P16882"/>
<dbReference type="OrthoDB" id="9890215at2759"/>
<dbReference type="PhylomeDB" id="P16882"/>
<dbReference type="Reactome" id="R-MMU-1170546">
    <property type="pathway name" value="Prolactin receptor signaling"/>
</dbReference>
<dbReference type="Reactome" id="R-MMU-982772">
    <property type="pathway name" value="Growth hormone receptor signaling"/>
</dbReference>
<dbReference type="BioGRID-ORCS" id="14600">
    <property type="hits" value="1 hit in 78 CRISPR screens"/>
</dbReference>
<dbReference type="ChiTaRS" id="Ghr">
    <property type="organism name" value="mouse"/>
</dbReference>
<dbReference type="PRO" id="PR:P16882"/>
<dbReference type="Proteomes" id="UP000000589">
    <property type="component" value="Chromosome 15"/>
</dbReference>
<dbReference type="RNAct" id="P16882">
    <property type="molecule type" value="protein"/>
</dbReference>
<dbReference type="Bgee" id="ENSMUSG00000055737">
    <property type="expression patterns" value="Expressed in proximal tubule and 248 other cell types or tissues"/>
</dbReference>
<dbReference type="ExpressionAtlas" id="P16882">
    <property type="expression patterns" value="baseline and differential"/>
</dbReference>
<dbReference type="GO" id="GO:0005576">
    <property type="term" value="C:extracellular region"/>
    <property type="evidence" value="ECO:0000304"/>
    <property type="project" value="Reactome"/>
</dbReference>
<dbReference type="GO" id="GO:0005615">
    <property type="term" value="C:extracellular space"/>
    <property type="evidence" value="ECO:0007005"/>
    <property type="project" value="BHF-UCL"/>
</dbReference>
<dbReference type="GO" id="GO:0016020">
    <property type="term" value="C:membrane"/>
    <property type="evidence" value="ECO:0000314"/>
    <property type="project" value="MGI"/>
</dbReference>
<dbReference type="GO" id="GO:0005634">
    <property type="term" value="C:nucleus"/>
    <property type="evidence" value="ECO:0000314"/>
    <property type="project" value="MGI"/>
</dbReference>
<dbReference type="GO" id="GO:0005886">
    <property type="term" value="C:plasma membrane"/>
    <property type="evidence" value="ECO:0000314"/>
    <property type="project" value="MGI"/>
</dbReference>
<dbReference type="GO" id="GO:0004903">
    <property type="term" value="F:growth hormone receptor activity"/>
    <property type="evidence" value="ECO:0000314"/>
    <property type="project" value="MGI"/>
</dbReference>
<dbReference type="GO" id="GO:0017046">
    <property type="term" value="F:peptide hormone binding"/>
    <property type="evidence" value="ECO:0000353"/>
    <property type="project" value="MGI"/>
</dbReference>
<dbReference type="GO" id="GO:0006897">
    <property type="term" value="P:endocytosis"/>
    <property type="evidence" value="ECO:0007669"/>
    <property type="project" value="UniProtKB-KW"/>
</dbReference>
<dbReference type="GO" id="GO:0060397">
    <property type="term" value="P:growth hormone receptor signaling pathway via JAK-STAT"/>
    <property type="evidence" value="ECO:0000314"/>
    <property type="project" value="BHF-UCL"/>
</dbReference>
<dbReference type="GO" id="GO:0040014">
    <property type="term" value="P:regulation of multicellular organism growth"/>
    <property type="evidence" value="ECO:0000315"/>
    <property type="project" value="BHF-UCL"/>
</dbReference>
<dbReference type="GO" id="GO:0019530">
    <property type="term" value="P:taurine metabolic process"/>
    <property type="evidence" value="ECO:0000315"/>
    <property type="project" value="BHF-UCL"/>
</dbReference>
<dbReference type="CDD" id="cd00063">
    <property type="entry name" value="FN3"/>
    <property type="match status" value="1"/>
</dbReference>
<dbReference type="FunFam" id="2.60.40.10:FF:000269">
    <property type="entry name" value="Growth hormone receptor"/>
    <property type="match status" value="1"/>
</dbReference>
<dbReference type="FunFam" id="2.60.40.10:FF:000318">
    <property type="entry name" value="Growth hormone receptor"/>
    <property type="match status" value="1"/>
</dbReference>
<dbReference type="Gene3D" id="2.60.40.10">
    <property type="entry name" value="Immunoglobulins"/>
    <property type="match status" value="2"/>
</dbReference>
<dbReference type="InterPro" id="IPR003961">
    <property type="entry name" value="FN3_dom"/>
</dbReference>
<dbReference type="InterPro" id="IPR036116">
    <property type="entry name" value="FN3_sf"/>
</dbReference>
<dbReference type="InterPro" id="IPR025871">
    <property type="entry name" value="GHBP"/>
</dbReference>
<dbReference type="InterPro" id="IPR015152">
    <property type="entry name" value="Growth/epo_recpt_lig-bind"/>
</dbReference>
<dbReference type="InterPro" id="IPR013783">
    <property type="entry name" value="Ig-like_fold"/>
</dbReference>
<dbReference type="InterPro" id="IPR003528">
    <property type="entry name" value="Long_hematopoietin_rcpt_CS"/>
</dbReference>
<dbReference type="PANTHER" id="PTHR23037">
    <property type="entry name" value="CYTOKINE RECEPTOR"/>
    <property type="match status" value="1"/>
</dbReference>
<dbReference type="PANTHER" id="PTHR23037:SF46">
    <property type="entry name" value="INTERLEUKIN 5 RECEPTOR SUBUNIT ALPHA"/>
    <property type="match status" value="1"/>
</dbReference>
<dbReference type="Pfam" id="PF09067">
    <property type="entry name" value="EpoR_lig-bind"/>
    <property type="match status" value="1"/>
</dbReference>
<dbReference type="Pfam" id="PF12772">
    <property type="entry name" value="GHBP"/>
    <property type="match status" value="1"/>
</dbReference>
<dbReference type="SUPFAM" id="SSF49265">
    <property type="entry name" value="Fibronectin type III"/>
    <property type="match status" value="2"/>
</dbReference>
<dbReference type="PROSITE" id="PS50853">
    <property type="entry name" value="FN3"/>
    <property type="match status" value="1"/>
</dbReference>
<dbReference type="PROSITE" id="PS01352">
    <property type="entry name" value="HEMATOPO_REC_L_F1"/>
    <property type="match status" value="1"/>
</dbReference>
<proteinExistence type="evidence at protein level"/>
<feature type="signal peptide" evidence="10">
    <location>
        <begin position="1"/>
        <end position="24"/>
    </location>
</feature>
<feature type="chain" id="PRO_0000010961" description="Growth hormone receptor">
    <location>
        <begin position="25"/>
        <end position="650"/>
    </location>
</feature>
<feature type="chain" id="PRO_0000010962" description="Growth hormone-binding protein" evidence="3">
    <location>
        <begin position="25"/>
        <end position="264"/>
    </location>
</feature>
<feature type="topological domain" description="Extracellular" evidence="4">
    <location>
        <begin position="25"/>
        <end position="273"/>
    </location>
</feature>
<feature type="transmembrane region" description="Helical" evidence="4">
    <location>
        <begin position="274"/>
        <end position="297"/>
    </location>
</feature>
<feature type="topological domain" description="Cytoplasmic" evidence="4">
    <location>
        <begin position="298"/>
        <end position="650"/>
    </location>
</feature>
<feature type="domain" description="Fibronectin type-III" evidence="5">
    <location>
        <begin position="159"/>
        <end position="262"/>
    </location>
</feature>
<feature type="region of interest" description="Required for JAK2 binding" evidence="2">
    <location>
        <begin position="303"/>
        <end position="390"/>
    </location>
</feature>
<feature type="region of interest" description="Disordered" evidence="6">
    <location>
        <begin position="466"/>
        <end position="486"/>
    </location>
</feature>
<feature type="short sequence motif" description="WSXWS motif" evidence="1">
    <location>
        <begin position="248"/>
        <end position="252"/>
    </location>
</feature>
<feature type="short sequence motif" description="Box 1 motif" evidence="2">
    <location>
        <begin position="306"/>
        <end position="314"/>
    </location>
</feature>
<feature type="short sequence motif" description="UbE motif" evidence="3">
    <location>
        <begin position="349"/>
        <end position="358"/>
    </location>
</feature>
<feature type="compositionally biased region" description="Polar residues" evidence="6">
    <location>
        <begin position="470"/>
        <end position="486"/>
    </location>
</feature>
<feature type="modified residue" description="Phosphoserine" evidence="1">
    <location>
        <position position="350"/>
    </location>
</feature>
<feature type="modified residue" description="Phosphotyrosine" evidence="1">
    <location>
        <position position="498"/>
    </location>
</feature>
<feature type="modified residue" description="Phosphotyrosine" evidence="1">
    <location>
        <position position="606"/>
    </location>
</feature>
<feature type="glycosylation site" description="N-linked (GlcNAc...) asparagine" evidence="4">
    <location>
        <position position="123"/>
    </location>
</feature>
<feature type="glycosylation site" description="N-linked (GlcNAc...) asparagine" evidence="4">
    <location>
        <position position="164"/>
    </location>
</feature>
<feature type="glycosylation site" description="N-linked (GlcNAc...) asparagine" evidence="4">
    <location>
        <position position="169"/>
    </location>
</feature>
<feature type="glycosylation site" description="N-linked (GlcNAc...) asparagine" evidence="4">
    <location>
        <position position="208"/>
    </location>
</feature>
<feature type="disulfide bond" evidence="1">
    <location>
        <begin position="56"/>
        <end position="66"/>
    </location>
</feature>
<feature type="disulfide bond" evidence="1">
    <location>
        <begin position="109"/>
        <end position="120"/>
    </location>
</feature>
<feature type="disulfide bond" evidence="1">
    <location>
        <begin position="134"/>
        <end position="148"/>
    </location>
</feature>
<feature type="splice variant" id="VSP_001716" description="In isoform 2." evidence="11 12">
    <original>DIQFPWFLIIIFGIFGVAVMLFVVIFS</original>
    <variation>GTKSNSQHPHQEIDNHLYHQLQRIRHP</variation>
    <location>
        <begin position="271"/>
        <end position="297"/>
    </location>
</feature>
<feature type="splice variant" id="VSP_001717" description="In isoform 2." evidence="11 12">
    <location>
        <begin position="298"/>
        <end position="650"/>
    </location>
</feature>
<feature type="sequence conflict" description="In Ref. 8; AA sequence." evidence="13" ref="8">
    <original>T</original>
    <variation>A</variation>
    <location>
        <position position="25"/>
    </location>
</feature>
<feature type="sequence conflict" description="In Ref. 5; AAK62802." evidence="13" ref="5">
    <original>G</original>
    <variation>A</variation>
    <location>
        <position position="162"/>
    </location>
</feature>
<feature type="sequence conflict" description="In Ref. 2; AAA69000." evidence="13" ref="2">
    <original>S</original>
    <variation>F</variation>
    <location>
        <position position="240"/>
    </location>
</feature>
<feature type="sequence conflict" description="In Ref. 3; AAD32556." evidence="13" ref="3">
    <original>E</original>
    <variation>G</variation>
    <location>
        <position position="325"/>
    </location>
</feature>
<feature type="sequence conflict" description="In Ref. 3; AAD32556, 4; AAH75720 and 7; AAP33018." evidence="13" ref="3 4 7">
    <original>R</original>
    <variation>A</variation>
    <location>
        <position position="423"/>
    </location>
</feature>
<feature type="sequence conflict" description="In Ref. 4; AAH75720 and 7; AAP33018." evidence="13" ref="4 7">
    <original>D</original>
    <variation>V</variation>
    <location>
        <position position="510"/>
    </location>
</feature>
<feature type="sequence conflict" description="In Ref. 4; AAH75720 and 7; AAP33018." evidence="13" ref="4 7">
    <original>R</original>
    <variation>P</variation>
    <location>
        <position position="559"/>
    </location>
</feature>